<accession>Q6G867</accession>
<name>NTDP_STAAS</name>
<comment type="function">
    <text evidence="1">Has nucleoside phosphatase activity towards nucleoside triphosphates and nucleoside diphosphates.</text>
</comment>
<comment type="catalytic activity">
    <reaction evidence="1">
        <text>a ribonucleoside 5'-triphosphate + H2O = a ribonucleoside 5'-diphosphate + phosphate + H(+)</text>
        <dbReference type="Rhea" id="RHEA:23680"/>
        <dbReference type="ChEBI" id="CHEBI:15377"/>
        <dbReference type="ChEBI" id="CHEBI:15378"/>
        <dbReference type="ChEBI" id="CHEBI:43474"/>
        <dbReference type="ChEBI" id="CHEBI:57930"/>
        <dbReference type="ChEBI" id="CHEBI:61557"/>
        <dbReference type="EC" id="3.6.1.15"/>
    </reaction>
</comment>
<comment type="catalytic activity">
    <reaction evidence="1">
        <text>a ribonucleoside 5'-diphosphate + H2O = a ribonucleoside 5'-phosphate + phosphate + H(+)</text>
        <dbReference type="Rhea" id="RHEA:36799"/>
        <dbReference type="ChEBI" id="CHEBI:15377"/>
        <dbReference type="ChEBI" id="CHEBI:15378"/>
        <dbReference type="ChEBI" id="CHEBI:43474"/>
        <dbReference type="ChEBI" id="CHEBI:57930"/>
        <dbReference type="ChEBI" id="CHEBI:58043"/>
        <dbReference type="EC" id="3.6.1.6"/>
    </reaction>
</comment>
<comment type="cofactor">
    <cofactor evidence="1">
        <name>Mg(2+)</name>
        <dbReference type="ChEBI" id="CHEBI:18420"/>
    </cofactor>
</comment>
<comment type="similarity">
    <text evidence="1">Belongs to the Ntdp family.</text>
</comment>
<reference key="1">
    <citation type="journal article" date="2004" name="Proc. Natl. Acad. Sci. U.S.A.">
        <title>Complete genomes of two clinical Staphylococcus aureus strains: evidence for the rapid evolution of virulence and drug resistance.</title>
        <authorList>
            <person name="Holden M.T.G."/>
            <person name="Feil E.J."/>
            <person name="Lindsay J.A."/>
            <person name="Peacock S.J."/>
            <person name="Day N.P.J."/>
            <person name="Enright M.C."/>
            <person name="Foster T.J."/>
            <person name="Moore C.E."/>
            <person name="Hurst L."/>
            <person name="Atkin R."/>
            <person name="Barron A."/>
            <person name="Bason N."/>
            <person name="Bentley S.D."/>
            <person name="Chillingworth C."/>
            <person name="Chillingworth T."/>
            <person name="Churcher C."/>
            <person name="Clark L."/>
            <person name="Corton C."/>
            <person name="Cronin A."/>
            <person name="Doggett J."/>
            <person name="Dowd L."/>
            <person name="Feltwell T."/>
            <person name="Hance Z."/>
            <person name="Harris B."/>
            <person name="Hauser H."/>
            <person name="Holroyd S."/>
            <person name="Jagels K."/>
            <person name="James K.D."/>
            <person name="Lennard N."/>
            <person name="Line A."/>
            <person name="Mayes R."/>
            <person name="Moule S."/>
            <person name="Mungall K."/>
            <person name="Ormond D."/>
            <person name="Quail M.A."/>
            <person name="Rabbinowitsch E."/>
            <person name="Rutherford K.M."/>
            <person name="Sanders M."/>
            <person name="Sharp S."/>
            <person name="Simmonds M."/>
            <person name="Stevens K."/>
            <person name="Whitehead S."/>
            <person name="Barrell B.G."/>
            <person name="Spratt B.G."/>
            <person name="Parkhill J."/>
        </authorList>
    </citation>
    <scope>NUCLEOTIDE SEQUENCE [LARGE SCALE GENOMIC DNA]</scope>
    <source>
        <strain>MSSA476</strain>
    </source>
</reference>
<evidence type="ECO:0000255" key="1">
    <source>
        <dbReference type="HAMAP-Rule" id="MF_01568"/>
    </source>
</evidence>
<dbReference type="EC" id="3.6.1.15" evidence="1"/>
<dbReference type="EC" id="3.6.1.6" evidence="1"/>
<dbReference type="EMBL" id="BX571857">
    <property type="protein sequence ID" value="CAG43594.1"/>
    <property type="molecule type" value="Genomic_DNA"/>
</dbReference>
<dbReference type="RefSeq" id="WP_000251255.1">
    <property type="nucleotide sequence ID" value="NC_002953.3"/>
</dbReference>
<dbReference type="SMR" id="Q6G867"/>
<dbReference type="KEGG" id="sas:SAS1789"/>
<dbReference type="HOGENOM" id="CLU_109787_1_0_9"/>
<dbReference type="GO" id="GO:0000287">
    <property type="term" value="F:magnesium ion binding"/>
    <property type="evidence" value="ECO:0007669"/>
    <property type="project" value="UniProtKB-UniRule"/>
</dbReference>
<dbReference type="GO" id="GO:0017110">
    <property type="term" value="F:nucleoside diphosphate phosphatase activity"/>
    <property type="evidence" value="ECO:0007669"/>
    <property type="project" value="UniProtKB-UniRule"/>
</dbReference>
<dbReference type="GO" id="GO:0017111">
    <property type="term" value="F:ribonucleoside triphosphate phosphatase activity"/>
    <property type="evidence" value="ECO:0007669"/>
    <property type="project" value="UniProtKB-UniRule"/>
</dbReference>
<dbReference type="Gene3D" id="2.40.380.10">
    <property type="entry name" value="FomD-like"/>
    <property type="match status" value="1"/>
</dbReference>
<dbReference type="HAMAP" id="MF_01568">
    <property type="entry name" value="Ntdp"/>
    <property type="match status" value="1"/>
</dbReference>
<dbReference type="InterPro" id="IPR007295">
    <property type="entry name" value="DUF402"/>
</dbReference>
<dbReference type="InterPro" id="IPR035930">
    <property type="entry name" value="FomD-like_sf"/>
</dbReference>
<dbReference type="InterPro" id="IPR050212">
    <property type="entry name" value="Ntdp-like"/>
</dbReference>
<dbReference type="InterPro" id="IPR016882">
    <property type="entry name" value="SA1684"/>
</dbReference>
<dbReference type="NCBIfam" id="NF010183">
    <property type="entry name" value="PRK13662.1"/>
    <property type="match status" value="1"/>
</dbReference>
<dbReference type="PANTHER" id="PTHR39159">
    <property type="match status" value="1"/>
</dbReference>
<dbReference type="PANTHER" id="PTHR39159:SF1">
    <property type="entry name" value="UPF0374 PROTEIN YGAC"/>
    <property type="match status" value="1"/>
</dbReference>
<dbReference type="Pfam" id="PF04167">
    <property type="entry name" value="DUF402"/>
    <property type="match status" value="1"/>
</dbReference>
<dbReference type="PIRSF" id="PIRSF028345">
    <property type="entry name" value="UCP028345"/>
    <property type="match status" value="1"/>
</dbReference>
<dbReference type="SUPFAM" id="SSF159234">
    <property type="entry name" value="FomD-like"/>
    <property type="match status" value="1"/>
</dbReference>
<keyword id="KW-0378">Hydrolase</keyword>
<keyword id="KW-0460">Magnesium</keyword>
<keyword id="KW-0479">Metal-binding</keyword>
<feature type="chain" id="PRO_0000248111" description="Nucleoside triphosphate/diphosphate phosphatase">
    <location>
        <begin position="1"/>
        <end position="180"/>
    </location>
</feature>
<feature type="active site" description="Proton donor" evidence="1">
    <location>
        <position position="26"/>
    </location>
</feature>
<feature type="binding site" evidence="1">
    <location>
        <position position="90"/>
    </location>
    <ligand>
        <name>Mg(2+)</name>
        <dbReference type="ChEBI" id="CHEBI:18420"/>
        <label>1</label>
    </ligand>
</feature>
<feature type="binding site" evidence="1">
    <location>
        <position position="106"/>
    </location>
    <ligand>
        <name>Mg(2+)</name>
        <dbReference type="ChEBI" id="CHEBI:18420"/>
        <label>1</label>
    </ligand>
</feature>
<feature type="binding site" evidence="1">
    <location>
        <position position="108"/>
    </location>
    <ligand>
        <name>Mg(2+)</name>
        <dbReference type="ChEBI" id="CHEBI:18420"/>
        <label>2</label>
    </ligand>
</feature>
<feature type="binding site" evidence="1">
    <location>
        <position position="110"/>
    </location>
    <ligand>
        <name>Mg(2+)</name>
        <dbReference type="ChEBI" id="CHEBI:18420"/>
        <label>1</label>
    </ligand>
</feature>
<feature type="binding site" evidence="1">
    <location>
        <position position="110"/>
    </location>
    <ligand>
        <name>Mg(2+)</name>
        <dbReference type="ChEBI" id="CHEBI:18420"/>
        <label>2</label>
    </ligand>
</feature>
<feature type="binding site" evidence="1">
    <location>
        <position position="123"/>
    </location>
    <ligand>
        <name>Mg(2+)</name>
        <dbReference type="ChEBI" id="CHEBI:18420"/>
        <label>2</label>
    </ligand>
</feature>
<feature type="binding site" evidence="1">
    <location>
        <position position="126"/>
    </location>
    <ligand>
        <name>Mg(2+)</name>
        <dbReference type="ChEBI" id="CHEBI:18420"/>
        <label>2</label>
    </ligand>
</feature>
<protein>
    <recommendedName>
        <fullName evidence="1">Nucleoside triphosphate/diphosphate phosphatase</fullName>
        <ecNumber evidence="1">3.6.1.15</ecNumber>
        <ecNumber evidence="1">3.6.1.6</ecNumber>
    </recommendedName>
</protein>
<proteinExistence type="inferred from homology"/>
<organism>
    <name type="scientific">Staphylococcus aureus (strain MSSA476)</name>
    <dbReference type="NCBI Taxonomy" id="282459"/>
    <lineage>
        <taxon>Bacteria</taxon>
        <taxon>Bacillati</taxon>
        <taxon>Bacillota</taxon>
        <taxon>Bacilli</taxon>
        <taxon>Bacillales</taxon>
        <taxon>Staphylococcaceae</taxon>
        <taxon>Staphylococcus</taxon>
    </lineage>
</organism>
<gene>
    <name type="ordered locus">SAS1789</name>
</gene>
<sequence>MVRESIPKEGENIKIQSYKHDGKIHRVWSETTILKGTDHVVIGGNDHTLVTESDGRTWITREPAIVYFHSEYWFNVICMFREDGIYYYCNLSSPFVCDEEALKYIDYDLDIKVYPNGKYHLLDEDEYEQHMNQMNYPHDIDIILRRNVDILQQWIEQKKGPFAPDFIKVWNERYKKIRQY</sequence>